<reference key="1">
    <citation type="journal article" date="2002" name="Genome Res.">
        <title>A complete sequence of the T. tengcongensis genome.</title>
        <authorList>
            <person name="Bao Q."/>
            <person name="Tian Y."/>
            <person name="Li W."/>
            <person name="Xu Z."/>
            <person name="Xuan Z."/>
            <person name="Hu S."/>
            <person name="Dong W."/>
            <person name="Yang J."/>
            <person name="Chen Y."/>
            <person name="Xue Y."/>
            <person name="Xu Y."/>
            <person name="Lai X."/>
            <person name="Huang L."/>
            <person name="Dong X."/>
            <person name="Ma Y."/>
            <person name="Ling L."/>
            <person name="Tan H."/>
            <person name="Chen R."/>
            <person name="Wang J."/>
            <person name="Yu J."/>
            <person name="Yang H."/>
        </authorList>
    </citation>
    <scope>NUCLEOTIDE SEQUENCE [LARGE SCALE GENOMIC DNA]</scope>
    <source>
        <strain>DSM 15242 / JCM 11007 / NBRC 100824 / MB4</strain>
    </source>
</reference>
<keyword id="KW-0067">ATP-binding</keyword>
<keyword id="KW-0963">Cytoplasm</keyword>
<keyword id="KW-0210">Decarboxylase</keyword>
<keyword id="KW-0312">Gluconeogenesis</keyword>
<keyword id="KW-0456">Lyase</keyword>
<keyword id="KW-0464">Manganese</keyword>
<keyword id="KW-0479">Metal-binding</keyword>
<keyword id="KW-0547">Nucleotide-binding</keyword>
<keyword id="KW-1185">Reference proteome</keyword>
<feature type="chain" id="PRO_0000203853" description="Phosphoenolpyruvate carboxykinase (ATP)">
    <location>
        <begin position="1"/>
        <end position="521"/>
    </location>
</feature>
<feature type="binding site" evidence="1">
    <location>
        <position position="52"/>
    </location>
    <ligand>
        <name>substrate</name>
    </ligand>
</feature>
<feature type="binding site" evidence="1">
    <location>
        <position position="186"/>
    </location>
    <ligand>
        <name>substrate</name>
    </ligand>
</feature>
<feature type="binding site" evidence="1">
    <location>
        <position position="192"/>
    </location>
    <ligand>
        <name>ATP</name>
        <dbReference type="ChEBI" id="CHEBI:30616"/>
    </ligand>
</feature>
<feature type="binding site" evidence="1">
    <location>
        <position position="192"/>
    </location>
    <ligand>
        <name>Mn(2+)</name>
        <dbReference type="ChEBI" id="CHEBI:29035"/>
    </ligand>
</feature>
<feature type="binding site" evidence="1">
    <location>
        <position position="192"/>
    </location>
    <ligand>
        <name>substrate</name>
    </ligand>
</feature>
<feature type="binding site" evidence="1">
    <location>
        <position position="211"/>
    </location>
    <ligand>
        <name>ATP</name>
        <dbReference type="ChEBI" id="CHEBI:30616"/>
    </ligand>
</feature>
<feature type="binding site" evidence="1">
    <location>
        <position position="211"/>
    </location>
    <ligand>
        <name>Mn(2+)</name>
        <dbReference type="ChEBI" id="CHEBI:29035"/>
    </ligand>
</feature>
<feature type="binding site" evidence="1">
    <location>
        <begin position="227"/>
        <end position="235"/>
    </location>
    <ligand>
        <name>ATP</name>
        <dbReference type="ChEBI" id="CHEBI:30616"/>
    </ligand>
</feature>
<feature type="binding site" evidence="1">
    <location>
        <position position="248"/>
    </location>
    <ligand>
        <name>Mn(2+)</name>
        <dbReference type="ChEBI" id="CHEBI:29035"/>
    </ligand>
</feature>
<feature type="binding site" evidence="1">
    <location>
        <position position="276"/>
    </location>
    <ligand>
        <name>ATP</name>
        <dbReference type="ChEBI" id="CHEBI:30616"/>
    </ligand>
</feature>
<feature type="binding site" evidence="1">
    <location>
        <position position="313"/>
    </location>
    <ligand>
        <name>ATP</name>
        <dbReference type="ChEBI" id="CHEBI:30616"/>
    </ligand>
</feature>
<feature type="binding site" evidence="1">
    <location>
        <position position="313"/>
    </location>
    <ligand>
        <name>substrate</name>
    </ligand>
</feature>
<feature type="binding site" evidence="1">
    <location>
        <begin position="432"/>
        <end position="433"/>
    </location>
    <ligand>
        <name>ATP</name>
        <dbReference type="ChEBI" id="CHEBI:30616"/>
    </ligand>
</feature>
<feature type="binding site" evidence="1">
    <location>
        <position position="438"/>
    </location>
    <ligand>
        <name>ATP</name>
        <dbReference type="ChEBI" id="CHEBI:30616"/>
    </ligand>
</feature>
<dbReference type="EC" id="4.1.1.49" evidence="1"/>
<dbReference type="EMBL" id="AE008691">
    <property type="protein sequence ID" value="AAM24977.1"/>
    <property type="molecule type" value="Genomic_DNA"/>
</dbReference>
<dbReference type="RefSeq" id="WP_011025979.1">
    <property type="nucleotide sequence ID" value="NZ_JANUCV010000001.1"/>
</dbReference>
<dbReference type="SMR" id="Q8R943"/>
<dbReference type="STRING" id="273068.TTE1783"/>
<dbReference type="KEGG" id="tte:TTE1783"/>
<dbReference type="eggNOG" id="COG1866">
    <property type="taxonomic scope" value="Bacteria"/>
</dbReference>
<dbReference type="HOGENOM" id="CLU_018247_0_1_9"/>
<dbReference type="OrthoDB" id="9806325at2"/>
<dbReference type="UniPathway" id="UPA00138"/>
<dbReference type="Proteomes" id="UP000000555">
    <property type="component" value="Chromosome"/>
</dbReference>
<dbReference type="GO" id="GO:0005829">
    <property type="term" value="C:cytosol"/>
    <property type="evidence" value="ECO:0007669"/>
    <property type="project" value="TreeGrafter"/>
</dbReference>
<dbReference type="GO" id="GO:0005524">
    <property type="term" value="F:ATP binding"/>
    <property type="evidence" value="ECO:0007669"/>
    <property type="project" value="UniProtKB-UniRule"/>
</dbReference>
<dbReference type="GO" id="GO:0046872">
    <property type="term" value="F:metal ion binding"/>
    <property type="evidence" value="ECO:0007669"/>
    <property type="project" value="UniProtKB-KW"/>
</dbReference>
<dbReference type="GO" id="GO:0004612">
    <property type="term" value="F:phosphoenolpyruvate carboxykinase (ATP) activity"/>
    <property type="evidence" value="ECO:0007669"/>
    <property type="project" value="UniProtKB-UniRule"/>
</dbReference>
<dbReference type="GO" id="GO:0006094">
    <property type="term" value="P:gluconeogenesis"/>
    <property type="evidence" value="ECO:0007669"/>
    <property type="project" value="UniProtKB-UniRule"/>
</dbReference>
<dbReference type="CDD" id="cd00484">
    <property type="entry name" value="PEPCK_ATP"/>
    <property type="match status" value="1"/>
</dbReference>
<dbReference type="FunFam" id="2.170.8.10:FF:000001">
    <property type="entry name" value="Phosphoenolpyruvate carboxykinase (ATP)"/>
    <property type="match status" value="1"/>
</dbReference>
<dbReference type="Gene3D" id="3.90.228.20">
    <property type="match status" value="1"/>
</dbReference>
<dbReference type="Gene3D" id="3.40.449.10">
    <property type="entry name" value="Phosphoenolpyruvate Carboxykinase, domain 1"/>
    <property type="match status" value="1"/>
</dbReference>
<dbReference type="Gene3D" id="2.170.8.10">
    <property type="entry name" value="Phosphoenolpyruvate Carboxykinase, domain 2"/>
    <property type="match status" value="1"/>
</dbReference>
<dbReference type="HAMAP" id="MF_00453">
    <property type="entry name" value="PEPCK_ATP"/>
    <property type="match status" value="1"/>
</dbReference>
<dbReference type="InterPro" id="IPR001272">
    <property type="entry name" value="PEP_carboxykinase_ATP"/>
</dbReference>
<dbReference type="InterPro" id="IPR013035">
    <property type="entry name" value="PEP_carboxykinase_C"/>
</dbReference>
<dbReference type="InterPro" id="IPR008210">
    <property type="entry name" value="PEP_carboxykinase_N"/>
</dbReference>
<dbReference type="InterPro" id="IPR015994">
    <property type="entry name" value="PEPCK_ATP_CS"/>
</dbReference>
<dbReference type="NCBIfam" id="TIGR00224">
    <property type="entry name" value="pckA"/>
    <property type="match status" value="1"/>
</dbReference>
<dbReference type="NCBIfam" id="NF006820">
    <property type="entry name" value="PRK09344.1-2"/>
    <property type="match status" value="1"/>
</dbReference>
<dbReference type="NCBIfam" id="NF006821">
    <property type="entry name" value="PRK09344.1-3"/>
    <property type="match status" value="1"/>
</dbReference>
<dbReference type="PANTHER" id="PTHR30031:SF0">
    <property type="entry name" value="PHOSPHOENOLPYRUVATE CARBOXYKINASE (ATP)"/>
    <property type="match status" value="1"/>
</dbReference>
<dbReference type="PANTHER" id="PTHR30031">
    <property type="entry name" value="PHOSPHOENOLPYRUVATE CARBOXYKINASE ATP"/>
    <property type="match status" value="1"/>
</dbReference>
<dbReference type="Pfam" id="PF01293">
    <property type="entry name" value="PEPCK_ATP"/>
    <property type="match status" value="1"/>
</dbReference>
<dbReference type="PIRSF" id="PIRSF006294">
    <property type="entry name" value="PEP_crbxkin"/>
    <property type="match status" value="1"/>
</dbReference>
<dbReference type="SUPFAM" id="SSF68923">
    <property type="entry name" value="PEP carboxykinase N-terminal domain"/>
    <property type="match status" value="1"/>
</dbReference>
<dbReference type="SUPFAM" id="SSF53795">
    <property type="entry name" value="PEP carboxykinase-like"/>
    <property type="match status" value="1"/>
</dbReference>
<dbReference type="PROSITE" id="PS00532">
    <property type="entry name" value="PEPCK_ATP"/>
    <property type="match status" value="1"/>
</dbReference>
<accession>Q8R943</accession>
<organism>
    <name type="scientific">Caldanaerobacter subterraneus subsp. tengcongensis (strain DSM 15242 / JCM 11007 / NBRC 100824 / MB4)</name>
    <name type="common">Thermoanaerobacter tengcongensis</name>
    <dbReference type="NCBI Taxonomy" id="273068"/>
    <lineage>
        <taxon>Bacteria</taxon>
        <taxon>Bacillati</taxon>
        <taxon>Bacillota</taxon>
        <taxon>Clostridia</taxon>
        <taxon>Thermoanaerobacterales</taxon>
        <taxon>Thermoanaerobacteraceae</taxon>
        <taxon>Caldanaerobacter</taxon>
    </lineage>
</organism>
<sequence length="521" mass="58771">MLNLERLGLINFKNVYRNLPVAKLIEEAVKREEGVLVNNGAFNVYTGKYTGRSPNDKFIVDEPEVHEDIWWENNKPISVEKFEKLYNRLIAYLQNRDLFIFDGFVGADPQYRVSIRVITEYAYQSLMARQLFIRPTEKELQNFVPEYTLIAAPRFKAIPEIDGVNSEAFIILSFTKKLIIIGGTQYGGEIKKSIFTLMNYLMPKKGVLSMHCSANIGKDGDTALFFGLSGTGKTTLSADPERFLIGDDEHGWSERGIFNFEGGCYAKCINLSREKEPQIWDSIRFGAILENVVYDEATRELDYTSDKITENTRAAYPIDFIPGAVQSGIGGHPKTIIFLTADAFGVLPPIAKLTKEQAMYYFLSGYTSKLAGTERGITEPQATFSTCFGAPFLPLPPMVYAKMLGEKIEKYDTKVFLVNTGWSGGPYGIGKRINLEYTRKMVSAALKGELDKVEFTKDPIFNLNIPASCPGVPSEILNPRNTWKDKEEYDKTAKRLAQRFIENFQKYKEVSEEIKNAGPKG</sequence>
<proteinExistence type="inferred from homology"/>
<protein>
    <recommendedName>
        <fullName evidence="1">Phosphoenolpyruvate carboxykinase (ATP)</fullName>
        <shortName evidence="1">PCK</shortName>
        <shortName evidence="1">PEP carboxykinase</shortName>
        <shortName evidence="1">PEPCK</shortName>
        <ecNumber evidence="1">4.1.1.49</ecNumber>
    </recommendedName>
</protein>
<evidence type="ECO:0000255" key="1">
    <source>
        <dbReference type="HAMAP-Rule" id="MF_00453"/>
    </source>
</evidence>
<gene>
    <name evidence="1" type="primary">pckA</name>
    <name type="ordered locus">TTE1783</name>
</gene>
<comment type="function">
    <text evidence="1">Involved in the gluconeogenesis. Catalyzes the conversion of oxaloacetate (OAA) to phosphoenolpyruvate (PEP) through direct phosphoryl transfer between the nucleoside triphosphate and OAA.</text>
</comment>
<comment type="catalytic activity">
    <reaction evidence="1">
        <text>oxaloacetate + ATP = phosphoenolpyruvate + ADP + CO2</text>
        <dbReference type="Rhea" id="RHEA:18617"/>
        <dbReference type="ChEBI" id="CHEBI:16452"/>
        <dbReference type="ChEBI" id="CHEBI:16526"/>
        <dbReference type="ChEBI" id="CHEBI:30616"/>
        <dbReference type="ChEBI" id="CHEBI:58702"/>
        <dbReference type="ChEBI" id="CHEBI:456216"/>
        <dbReference type="EC" id="4.1.1.49"/>
    </reaction>
</comment>
<comment type="cofactor">
    <cofactor evidence="1">
        <name>Mn(2+)</name>
        <dbReference type="ChEBI" id="CHEBI:29035"/>
    </cofactor>
    <text evidence="1">Binds 1 Mn(2+) ion per subunit.</text>
</comment>
<comment type="pathway">
    <text evidence="1">Carbohydrate biosynthesis; gluconeogenesis.</text>
</comment>
<comment type="subcellular location">
    <subcellularLocation>
        <location evidence="1">Cytoplasm</location>
    </subcellularLocation>
</comment>
<comment type="similarity">
    <text evidence="1">Belongs to the phosphoenolpyruvate carboxykinase (ATP) family.</text>
</comment>
<name>PCKA_CALS4</name>